<name>RL10_HERAR</name>
<accession>A4G9U7</accession>
<protein>
    <recommendedName>
        <fullName evidence="1">Large ribosomal subunit protein uL10</fullName>
    </recommendedName>
    <alternativeName>
        <fullName evidence="2">50S ribosomal protein L10</fullName>
    </alternativeName>
</protein>
<proteinExistence type="inferred from homology"/>
<comment type="function">
    <text evidence="1">Forms part of the ribosomal stalk, playing a central role in the interaction of the ribosome with GTP-bound translation factors.</text>
</comment>
<comment type="subunit">
    <text evidence="1">Part of the ribosomal stalk of the 50S ribosomal subunit. The N-terminus interacts with L11 and the large rRNA to form the base of the stalk. The C-terminus forms an elongated spine to which L12 dimers bind in a sequential fashion forming a multimeric L10(L12)X complex.</text>
</comment>
<comment type="similarity">
    <text evidence="1">Belongs to the universal ribosomal protein uL10 family.</text>
</comment>
<dbReference type="EMBL" id="CU207211">
    <property type="protein sequence ID" value="CAL63284.1"/>
    <property type="molecule type" value="Genomic_DNA"/>
</dbReference>
<dbReference type="SMR" id="A4G9U7"/>
<dbReference type="STRING" id="204773.HEAR3175"/>
<dbReference type="KEGG" id="har:HEAR3175"/>
<dbReference type="eggNOG" id="COG0244">
    <property type="taxonomic scope" value="Bacteria"/>
</dbReference>
<dbReference type="HOGENOM" id="CLU_092227_0_1_4"/>
<dbReference type="OrthoDB" id="9808307at2"/>
<dbReference type="Proteomes" id="UP000006697">
    <property type="component" value="Chromosome"/>
</dbReference>
<dbReference type="GO" id="GO:0015934">
    <property type="term" value="C:large ribosomal subunit"/>
    <property type="evidence" value="ECO:0007669"/>
    <property type="project" value="InterPro"/>
</dbReference>
<dbReference type="GO" id="GO:0070180">
    <property type="term" value="F:large ribosomal subunit rRNA binding"/>
    <property type="evidence" value="ECO:0007669"/>
    <property type="project" value="UniProtKB-UniRule"/>
</dbReference>
<dbReference type="GO" id="GO:0003735">
    <property type="term" value="F:structural constituent of ribosome"/>
    <property type="evidence" value="ECO:0007669"/>
    <property type="project" value="InterPro"/>
</dbReference>
<dbReference type="GO" id="GO:0006412">
    <property type="term" value="P:translation"/>
    <property type="evidence" value="ECO:0007669"/>
    <property type="project" value="UniProtKB-UniRule"/>
</dbReference>
<dbReference type="CDD" id="cd05797">
    <property type="entry name" value="Ribosomal_L10"/>
    <property type="match status" value="1"/>
</dbReference>
<dbReference type="Gene3D" id="3.30.70.1730">
    <property type="match status" value="1"/>
</dbReference>
<dbReference type="Gene3D" id="6.10.250.290">
    <property type="match status" value="1"/>
</dbReference>
<dbReference type="HAMAP" id="MF_00362">
    <property type="entry name" value="Ribosomal_uL10"/>
    <property type="match status" value="1"/>
</dbReference>
<dbReference type="InterPro" id="IPR001790">
    <property type="entry name" value="Ribosomal_uL10"/>
</dbReference>
<dbReference type="InterPro" id="IPR043141">
    <property type="entry name" value="Ribosomal_uL10-like_sf"/>
</dbReference>
<dbReference type="InterPro" id="IPR022973">
    <property type="entry name" value="Ribosomal_uL10_bac"/>
</dbReference>
<dbReference type="InterPro" id="IPR047865">
    <property type="entry name" value="Ribosomal_uL10_bac_type"/>
</dbReference>
<dbReference type="InterPro" id="IPR002363">
    <property type="entry name" value="Ribosomal_uL10_CS_bac"/>
</dbReference>
<dbReference type="NCBIfam" id="NF000955">
    <property type="entry name" value="PRK00099.1-1"/>
    <property type="match status" value="1"/>
</dbReference>
<dbReference type="PANTHER" id="PTHR11560">
    <property type="entry name" value="39S RIBOSOMAL PROTEIN L10, MITOCHONDRIAL"/>
    <property type="match status" value="1"/>
</dbReference>
<dbReference type="Pfam" id="PF00466">
    <property type="entry name" value="Ribosomal_L10"/>
    <property type="match status" value="1"/>
</dbReference>
<dbReference type="SUPFAM" id="SSF160369">
    <property type="entry name" value="Ribosomal protein L10-like"/>
    <property type="match status" value="1"/>
</dbReference>
<dbReference type="PROSITE" id="PS01109">
    <property type="entry name" value="RIBOSOMAL_L10"/>
    <property type="match status" value="1"/>
</dbReference>
<sequence length="182" mass="18906">MSLNLNDKKAVVAEISAKVATAQTIVVAEYRGIQVGHLTQLRAKARDQGVYLRVLKNTLARRAVEGTAFADLASEMTGPLIYSISDDAVAAAKVISDFAKTNDKLVVKAGNYAGKTLDKAAVTALANIPSREVLLAQVLGMMLVPVASFTRGLAALAAKKAEGETPAAAAEPVAEVTEAAAE</sequence>
<gene>
    <name evidence="1" type="primary">rplJ</name>
    <name type="ordered locus">HEAR3175</name>
</gene>
<evidence type="ECO:0000255" key="1">
    <source>
        <dbReference type="HAMAP-Rule" id="MF_00362"/>
    </source>
</evidence>
<evidence type="ECO:0000305" key="2"/>
<feature type="chain" id="PRO_1000005511" description="Large ribosomal subunit protein uL10">
    <location>
        <begin position="1"/>
        <end position="182"/>
    </location>
</feature>
<organism>
    <name type="scientific">Herminiimonas arsenicoxydans</name>
    <dbReference type="NCBI Taxonomy" id="204773"/>
    <lineage>
        <taxon>Bacteria</taxon>
        <taxon>Pseudomonadati</taxon>
        <taxon>Pseudomonadota</taxon>
        <taxon>Betaproteobacteria</taxon>
        <taxon>Burkholderiales</taxon>
        <taxon>Oxalobacteraceae</taxon>
        <taxon>Herminiimonas</taxon>
    </lineage>
</organism>
<reference key="1">
    <citation type="journal article" date="2007" name="PLoS Genet.">
        <title>A tale of two oxidation states: bacterial colonization of arsenic-rich environments.</title>
        <authorList>
            <person name="Muller D."/>
            <person name="Medigue C."/>
            <person name="Koechler S."/>
            <person name="Barbe V."/>
            <person name="Barakat M."/>
            <person name="Talla E."/>
            <person name="Bonnefoy V."/>
            <person name="Krin E."/>
            <person name="Arsene-Ploetze F."/>
            <person name="Carapito C."/>
            <person name="Chandler M."/>
            <person name="Cournoyer B."/>
            <person name="Cruveiller S."/>
            <person name="Dossat C."/>
            <person name="Duval S."/>
            <person name="Heymann M."/>
            <person name="Leize E."/>
            <person name="Lieutaud A."/>
            <person name="Lievremont D."/>
            <person name="Makita Y."/>
            <person name="Mangenot S."/>
            <person name="Nitschke W."/>
            <person name="Ortet P."/>
            <person name="Perdrial N."/>
            <person name="Schoepp B."/>
            <person name="Siguier P."/>
            <person name="Simeonova D.D."/>
            <person name="Rouy Z."/>
            <person name="Segurens B."/>
            <person name="Turlin E."/>
            <person name="Vallenet D."/>
            <person name="van Dorsselaer A."/>
            <person name="Weiss S."/>
            <person name="Weissenbach J."/>
            <person name="Lett M.-C."/>
            <person name="Danchin A."/>
            <person name="Bertin P.N."/>
        </authorList>
    </citation>
    <scope>NUCLEOTIDE SEQUENCE [LARGE SCALE GENOMIC DNA]</scope>
    <source>
        <strain>ULPAs1</strain>
    </source>
</reference>
<keyword id="KW-1185">Reference proteome</keyword>
<keyword id="KW-0687">Ribonucleoprotein</keyword>
<keyword id="KW-0689">Ribosomal protein</keyword>
<keyword id="KW-0694">RNA-binding</keyword>
<keyword id="KW-0699">rRNA-binding</keyword>